<proteinExistence type="evidence at protein level"/>
<name>DMPP_ACIP2</name>
<evidence type="ECO:0000250" key="1"/>
<evidence type="ECO:0000250" key="2">
    <source>
        <dbReference type="UniProtKB" id="P19734"/>
    </source>
</evidence>
<evidence type="ECO:0000255" key="3">
    <source>
        <dbReference type="PROSITE-ProRule" id="PRU00465"/>
    </source>
</evidence>
<evidence type="ECO:0000255" key="4">
    <source>
        <dbReference type="PROSITE-ProRule" id="PRU00716"/>
    </source>
</evidence>
<evidence type="ECO:0000269" key="5">
    <source ref="3"/>
</evidence>
<evidence type="ECO:0000305" key="6"/>
<evidence type="ECO:0000312" key="7">
    <source>
        <dbReference type="EMBL" id="CAD92316.1"/>
    </source>
</evidence>
<keyword id="KW-0001">2Fe-2S</keyword>
<keyword id="KW-0058">Aromatic hydrocarbons catabolism</keyword>
<keyword id="KW-0903">Direct protein sequencing</keyword>
<keyword id="KW-0249">Electron transport</keyword>
<keyword id="KW-0274">FAD</keyword>
<keyword id="KW-0285">Flavoprotein</keyword>
<keyword id="KW-0408">Iron</keyword>
<keyword id="KW-0411">Iron-sulfur</keyword>
<keyword id="KW-0479">Metal-binding</keyword>
<keyword id="KW-0503">Monooxygenase</keyword>
<keyword id="KW-0521">NADP</keyword>
<keyword id="KW-0560">Oxidoreductase</keyword>
<keyword id="KW-1185">Reference proteome</keyword>
<keyword id="KW-0813">Transport</keyword>
<protein>
    <recommendedName>
        <fullName>Phenol hydroxylase P5 protein</fullName>
        <ecNumber>1.14.13.7</ecNumber>
    </recommendedName>
    <alternativeName>
        <fullName>Phenol 2-monooxygenase P5 component</fullName>
    </alternativeName>
</protein>
<dbReference type="EC" id="1.14.13.7"/>
<dbReference type="EMBL" id="AJ564846">
    <property type="protein sequence ID" value="CAD92316.1"/>
    <property type="molecule type" value="Genomic_DNA"/>
</dbReference>
<dbReference type="EMBL" id="CP002177">
    <property type="protein sequence ID" value="ADY81056.1"/>
    <property type="molecule type" value="Genomic_DNA"/>
</dbReference>
<dbReference type="RefSeq" id="WP_014206216.1">
    <property type="nucleotide sequence ID" value="NC_016603.1"/>
</dbReference>
<dbReference type="RefSeq" id="YP_004994738.1">
    <property type="nucleotide sequence ID" value="NC_016603.1"/>
</dbReference>
<dbReference type="SMR" id="Q7WTJ2"/>
<dbReference type="STRING" id="871585.BDGL_000470"/>
<dbReference type="TCDB" id="5.B.1.3.2">
    <property type="family name" value="the phagocyte (gp91(phox)) nadph oxidase family"/>
</dbReference>
<dbReference type="GeneID" id="11638648"/>
<dbReference type="KEGG" id="acc:BDGL_000470"/>
<dbReference type="PATRIC" id="fig|871585.3.peg.467"/>
<dbReference type="eggNOG" id="COG2871">
    <property type="taxonomic scope" value="Bacteria"/>
</dbReference>
<dbReference type="HOGENOM" id="CLU_003827_7_0_6"/>
<dbReference type="OrthoDB" id="9806195at2"/>
<dbReference type="UniPathway" id="UPA00728"/>
<dbReference type="Proteomes" id="UP000007477">
    <property type="component" value="Chromosome"/>
</dbReference>
<dbReference type="GO" id="GO:0051537">
    <property type="term" value="F:2 iron, 2 sulfur cluster binding"/>
    <property type="evidence" value="ECO:0007669"/>
    <property type="project" value="UniProtKB-KW"/>
</dbReference>
<dbReference type="GO" id="GO:0046872">
    <property type="term" value="F:metal ion binding"/>
    <property type="evidence" value="ECO:0007669"/>
    <property type="project" value="UniProtKB-KW"/>
</dbReference>
<dbReference type="GO" id="GO:0018662">
    <property type="term" value="F:phenol 2-monooxygenase activity"/>
    <property type="evidence" value="ECO:0000250"/>
    <property type="project" value="UniProtKB"/>
</dbReference>
<dbReference type="GO" id="GO:0046191">
    <property type="term" value="P:aerobic phenol-containing compound catabolic process"/>
    <property type="evidence" value="ECO:0000250"/>
    <property type="project" value="UniProtKB"/>
</dbReference>
<dbReference type="CDD" id="cd00207">
    <property type="entry name" value="fer2"/>
    <property type="match status" value="1"/>
</dbReference>
<dbReference type="CDD" id="cd06211">
    <property type="entry name" value="phenol_2-monooxygenase_like"/>
    <property type="match status" value="1"/>
</dbReference>
<dbReference type="FunFam" id="2.40.30.10:FF:000093">
    <property type="entry name" value="Naphthalene 1,2-dioxygenase reductase component"/>
    <property type="match status" value="1"/>
</dbReference>
<dbReference type="FunFam" id="3.10.20.30:FF:000033">
    <property type="entry name" value="Phenol hydroxylase component"/>
    <property type="match status" value="1"/>
</dbReference>
<dbReference type="Gene3D" id="3.10.20.30">
    <property type="match status" value="1"/>
</dbReference>
<dbReference type="Gene3D" id="3.40.50.80">
    <property type="entry name" value="Nucleotide-binding domain of ferredoxin-NADP reductase (FNR) module"/>
    <property type="match status" value="1"/>
</dbReference>
<dbReference type="Gene3D" id="2.40.30.10">
    <property type="entry name" value="Translation factors"/>
    <property type="match status" value="1"/>
</dbReference>
<dbReference type="InterPro" id="IPR036010">
    <property type="entry name" value="2Fe-2S_ferredoxin-like_sf"/>
</dbReference>
<dbReference type="InterPro" id="IPR001041">
    <property type="entry name" value="2Fe-2S_ferredoxin-type"/>
</dbReference>
<dbReference type="InterPro" id="IPR006058">
    <property type="entry name" value="2Fe2S_fd_BS"/>
</dbReference>
<dbReference type="InterPro" id="IPR012675">
    <property type="entry name" value="Beta-grasp_dom_sf"/>
</dbReference>
<dbReference type="InterPro" id="IPR008333">
    <property type="entry name" value="Cbr1-like_FAD-bd_dom"/>
</dbReference>
<dbReference type="InterPro" id="IPR017927">
    <property type="entry name" value="FAD-bd_FR_type"/>
</dbReference>
<dbReference type="InterPro" id="IPR039261">
    <property type="entry name" value="FNR_nucleotide-bd"/>
</dbReference>
<dbReference type="InterPro" id="IPR001433">
    <property type="entry name" value="OxRdtase_FAD/NAD-bd"/>
</dbReference>
<dbReference type="InterPro" id="IPR017938">
    <property type="entry name" value="Riboflavin_synthase-like_b-brl"/>
</dbReference>
<dbReference type="PANTHER" id="PTHR43644">
    <property type="entry name" value="NA(+)-TRANSLOCATING NADH-QUINONE REDUCTASE SUBUNIT"/>
    <property type="match status" value="1"/>
</dbReference>
<dbReference type="PANTHER" id="PTHR43644:SF1">
    <property type="entry name" value="NAD(P)H-FLAVIN REDUCTASE"/>
    <property type="match status" value="1"/>
</dbReference>
<dbReference type="Pfam" id="PF00970">
    <property type="entry name" value="FAD_binding_6"/>
    <property type="match status" value="1"/>
</dbReference>
<dbReference type="Pfam" id="PF00111">
    <property type="entry name" value="Fer2"/>
    <property type="match status" value="1"/>
</dbReference>
<dbReference type="Pfam" id="PF00175">
    <property type="entry name" value="NAD_binding_1"/>
    <property type="match status" value="1"/>
</dbReference>
<dbReference type="PRINTS" id="PR00410">
    <property type="entry name" value="PHEHYDRXLASE"/>
</dbReference>
<dbReference type="SUPFAM" id="SSF54292">
    <property type="entry name" value="2Fe-2S ferredoxin-like"/>
    <property type="match status" value="1"/>
</dbReference>
<dbReference type="SUPFAM" id="SSF52343">
    <property type="entry name" value="Ferredoxin reductase-like, C-terminal NADP-linked domain"/>
    <property type="match status" value="1"/>
</dbReference>
<dbReference type="SUPFAM" id="SSF63380">
    <property type="entry name" value="Riboflavin synthase domain-like"/>
    <property type="match status" value="1"/>
</dbReference>
<dbReference type="PROSITE" id="PS00197">
    <property type="entry name" value="2FE2S_FER_1"/>
    <property type="match status" value="1"/>
</dbReference>
<dbReference type="PROSITE" id="PS51085">
    <property type="entry name" value="2FE2S_FER_2"/>
    <property type="match status" value="1"/>
</dbReference>
<dbReference type="PROSITE" id="PS51384">
    <property type="entry name" value="FAD_FR"/>
    <property type="match status" value="1"/>
</dbReference>
<reference evidence="7" key="1">
    <citation type="journal article" date="2003" name="Curr. Microbiol.">
        <title>Genetic organization of genes encoding phenol hydroxylase, benzoate 1,2-dioxygenase alpha subunit and its regulatory proteins in Acinetobacter calcoaceticus PHEA-2.</title>
        <authorList>
            <person name="Xu Y."/>
            <person name="Chen M."/>
            <person name="Zhang W."/>
            <person name="Lin M."/>
        </authorList>
    </citation>
    <scope>NUCLEOTIDE SEQUENCE [GENOMIC DNA]</scope>
    <source>
        <strain evidence="7">PHEA-2</strain>
    </source>
</reference>
<reference key="2">
    <citation type="journal article" date="2011" name="J. Bacteriol.">
        <title>Genome sequence of Acinetobacter calcoaceticus PHEA-2, isolated from industry wastewater.</title>
        <authorList>
            <person name="Zhan Y."/>
            <person name="Yan Y."/>
            <person name="Zhang W."/>
            <person name="Yu H."/>
            <person name="Chen M."/>
            <person name="Lu W."/>
            <person name="Ping S."/>
            <person name="Peng Z."/>
            <person name="Yuan M."/>
            <person name="Zhou Z."/>
            <person name="Elmerich C."/>
            <person name="Lin M."/>
        </authorList>
    </citation>
    <scope>NUCLEOTIDE SEQUENCE [LARGE SCALE GENOMIC DNA]</scope>
    <source>
        <strain>PHEA-2</strain>
    </source>
</reference>
<reference evidence="6" key="3">
    <citation type="journal article" date="2004" name="Eng. Life Sci.">
        <title>Growth on phenol at chemostress levels amplifies the expression of the phenol degradation pathway in Acinetobacter calcoaceticus.</title>
        <authorList>
            <person name="Benndorf D."/>
            <person name="Loffhagen N."/>
            <person name="Hartig C."/>
            <person name="Babel W."/>
        </authorList>
    </citation>
    <scope>PROTEIN SEQUENCE OF 2-26</scope>
    <scope>INDUCTION</scope>
    <source>
        <strain>69-V</strain>
    </source>
</reference>
<accession>Q7WTJ2</accession>
<accession>F0KIB8</accession>
<organism>
    <name type="scientific">Acinetobacter pittii (strain PHEA-2)</name>
    <dbReference type="NCBI Taxonomy" id="871585"/>
    <lineage>
        <taxon>Bacteria</taxon>
        <taxon>Pseudomonadati</taxon>
        <taxon>Pseudomonadota</taxon>
        <taxon>Gammaproteobacteria</taxon>
        <taxon>Moraxellales</taxon>
        <taxon>Moraxellaceae</taxon>
        <taxon>Acinetobacter</taxon>
        <taxon>Acinetobacter calcoaceticus/baumannii complex</taxon>
    </lineage>
</organism>
<comment type="function">
    <text evidence="2">Catabolizes phenol, and some of its methylated derivatives. P5 is required for growth on phenol, and for in vitro phenol hydroxylase activity (By similarity).</text>
</comment>
<comment type="function">
    <text evidence="2">Probable electron transfer from NADPH, via FAD and the 2Fe-2S center, to the oxygenase activity site of the enzyme.</text>
</comment>
<comment type="catalytic activity">
    <reaction evidence="2">
        <text>phenol + NADPH + O2 + H(+) = catechol + NADP(+) + H2O</text>
        <dbReference type="Rhea" id="RHEA:17061"/>
        <dbReference type="ChEBI" id="CHEBI:15377"/>
        <dbReference type="ChEBI" id="CHEBI:15378"/>
        <dbReference type="ChEBI" id="CHEBI:15379"/>
        <dbReference type="ChEBI" id="CHEBI:15882"/>
        <dbReference type="ChEBI" id="CHEBI:18135"/>
        <dbReference type="ChEBI" id="CHEBI:57783"/>
        <dbReference type="ChEBI" id="CHEBI:58349"/>
        <dbReference type="EC" id="1.14.13.7"/>
    </reaction>
</comment>
<comment type="cofactor">
    <cofactor evidence="1">
        <name>FAD</name>
        <dbReference type="ChEBI" id="CHEBI:57692"/>
    </cofactor>
    <text evidence="1">Binds 1 FAD.</text>
</comment>
<comment type="cofactor">
    <cofactor evidence="1">
        <name>[2Fe-2S] cluster</name>
        <dbReference type="ChEBI" id="CHEBI:190135"/>
    </cofactor>
    <text evidence="1">Binds 1 [2Fe-2S] cluster.</text>
</comment>
<comment type="pathway">
    <text>Aromatic compound metabolism; phenol degradation.</text>
</comment>
<comment type="subunit">
    <text evidence="2">The multicomponent enzyme phenol hydroxylase is formed by P0, P1, P2, P3, P4 and P5 polypeptides.</text>
</comment>
<comment type="induction">
    <text evidence="5 6">By phenol.</text>
</comment>
<feature type="initiator methionine" description="Removed" evidence="5">
    <location>
        <position position="1"/>
    </location>
</feature>
<feature type="chain" id="PRO_0000189406" description="Phenol hydroxylase P5 protein">
    <location>
        <begin position="2"/>
        <end position="353"/>
    </location>
</feature>
<feature type="domain" description="2Fe-2S ferredoxin-type" evidence="3">
    <location>
        <begin position="3"/>
        <end position="93"/>
    </location>
</feature>
<feature type="domain" description="FAD-binding FR-type" evidence="4">
    <location>
        <begin position="102"/>
        <end position="201"/>
    </location>
</feature>
<feature type="binding site" evidence="3">
    <location>
        <position position="37"/>
    </location>
    <ligand>
        <name>[2Fe-2S] cluster</name>
        <dbReference type="ChEBI" id="CHEBI:190135"/>
    </ligand>
</feature>
<feature type="binding site" evidence="3">
    <location>
        <position position="42"/>
    </location>
    <ligand>
        <name>[2Fe-2S] cluster</name>
        <dbReference type="ChEBI" id="CHEBI:190135"/>
    </ligand>
</feature>
<feature type="binding site" evidence="3">
    <location>
        <position position="45"/>
    </location>
    <ligand>
        <name>[2Fe-2S] cluster</name>
        <dbReference type="ChEBI" id="CHEBI:190135"/>
    </ligand>
</feature>
<feature type="binding site" evidence="3">
    <location>
        <position position="77"/>
    </location>
    <ligand>
        <name>[2Fe-2S] cluster</name>
        <dbReference type="ChEBI" id="CHEBI:190135"/>
    </ligand>
</feature>
<sequence>MSYQVTIEPIGTTIEVEEDQTILDAALRQGVWLPFACGHGTCGTCKVQVTDGFYDVGEASPFALMDIERDENKVLACCCKPQSDMVIEADVDEDPDFLGHLVQDYQATVIEIKDLSPTIKGIRLQLDRPIEFQAGQYINVQFPNIEGTRAFSIANSPSEVGIVELHIRKVEGGAATTYVHEQLATGDQLDISGPYGQFFVRKSDDQNAIFIAGGSGLSSPQSMILDLLESGDSRTIYLFQGARDLAELYNRELFEQLVKDYPNFRYIPALNAPKPEDQWTGFTGFVHEAVADYFENRCGGHKAYLCGPPIMIDSAISTLMQSRLFERDIHTERFLSAADGAAGQSRSALFKHI</sequence>
<gene>
    <name type="primary">mphP</name>
    <name type="ordered locus">BDGL_000470</name>
</gene>